<comment type="function">
    <text evidence="3 4 7 9 18">Functions in an input pathway to the Kai circadian clock (PubMed:10926536). Senses oxidized quinones via its C-terminal pseudo-receiver domain, providing a link between cell metabolism and the clock (PubMed:17088557, PubMed:20231482). Affects the ratio of phosphorylated to unphosphorylated KaiC, binds quinones via its pseudo-receptor domain. Quinone-binding destabilizes the protein rapidly (PubMed:17088557, PubMed:20231482). Autophosphorylates, does not transfer the phosphate to its pseudo-receiver (PsR) domain (PubMed:12626498). May play a role in cell division, as suggested by its polar location and increased cell length in a deletion strain (Probable).</text>
</comment>
<comment type="function">
    <text evidence="8 10 13">Member of the two-component regulatory system CikA/RpaA output pathway from the circadian clock, negatively regulating kaiBC expression independently of labA and of sasA. One of three clock output pathways (PubMed:20133618). Dephosphorylates phospho-RpaA, enhanced by KaiB and KaiC, has only modest kinase activity on RpaA (PubMed:23541768, PubMed:34618577). A very robust clock is reconstituted with KaiA, KaiB, KaiC, SasA, CikA and RpaA; output is measured by transcription from an appropriate reporter (PubMed:34618577).</text>
</comment>
<comment type="catalytic activity">
    <reaction evidence="4">
        <text>ATP + protein L-histidine = ADP + protein N-phospho-L-histidine.</text>
        <dbReference type="EC" id="2.7.13.3"/>
    </reaction>
</comment>
<comment type="subunit">
    <text evidence="5 6 7 11 12 13">Homodimer (PubMed:16629668). Part of the circadian clock (KaiA, KaiB, KaiC, CikA, RpaA, SasA), the composition of which varies during the circadian cycle (PubMed:15775978, PubMed:17088557, PubMed:26113641, PubMed:28302851, PubMed:34618577). Interacts with LdpA (PubMed:15775978). KaiA and CikA compete for binding to KaiB(fs) (PubMed:26113641, PubMed:28302851, PubMed:34618577).</text>
</comment>
<comment type="subcellular location">
    <subcellularLocation>
        <location evidence="7">Cytoplasm</location>
    </subcellularLocation>
    <subcellularLocation>
        <location evidence="7">Membrane</location>
    </subcellularLocation>
    <text evidence="6 7">Localized in tight foci at one or both cell poles (PubMed:16629668). Both soluble and membrane-associated (PubMed:17088557).</text>
</comment>
<comment type="induction">
    <text evidence="5 7 9">In light/dark cycles, increases in the dark phase and decreases in the light (at protein level). Rapidly degraded in the presence of the quinone analogs DBMIB (2,5-dibromo-3-methyl-6-isopropyl-p-benzoquinone) and DCBQ (2,5-dichloro-1,4-benzoquinone), artifical electron acceptors for photosystem II that reduce the plastoquinone pool (PubMed:15775978, PubMed:17088557). Oxidized but not reduced DBMIB leads to protein degradation (at protein level) (PubMed:20231482). Low constant protein levels in the absence of ldpA (PubMed:15775978).</text>
</comment>
<comment type="domain">
    <text evidence="3 4 6 7 11">The N-terminal domain is followed by a GAF (phytochrome-like) domain that lacks the conserved Cys residue for ligand binding, a histidine kinase domain and a C-terminal response regulator domain without the conserved Asp residue that is phosphorylated (pseudo-receiver domain, PsR) (PubMed:10926536, PubMed:12626498). Autophosphorylation is dramatically reduced in the absence of the N-terminus (residues 1-183), and lacking in the absence of the GAF domain; removal of PsR increases autophosphorylation 10-fold. Thus PsR may suppress the histidine kinase domain (PubMed:12626498, PubMed:16629668). The GAF and PsR domains are required to complement the deletion strain (PubMed:16629668). The PsR domain is responsible for DBMIB sensitivity and binds quinones directly (PubMed:17088557). A KaiB mutant locked in the KaiB(fs) form binds the CikA PsR domain (PubMed:26113641).</text>
</comment>
<comment type="disruption phenotype">
    <text evidence="3 6 7 8 10">Shortens the photoperiod by 2 hours as well as its amplitude, and offsets it by about 6 hours. Uncouples kaiA and kaiBC expression, cells no longer reset the clock in response to a dark pulse (PubMed:10926536, PubMed:16629668). Cells are very long (PubMed:16629668). Half of KaiC is always phosphorylated, phosphorylation phase is disrupted (PubMed:17088557, PubMed:20133618). In double labA-cikA deletions KaiC levels are much higher than either deletion alone, but the phosphorylation ratios are nearly wild-type (PubMed:20133618). RpaA is highly phosphorylated (PubMed:23541768).</text>
</comment>
<comment type="similarity">
    <text evidence="16">In the N-terminal section; belongs to the phytochrome family.</text>
</comment>
<reference evidence="19" key="1">
    <citation type="journal article" date="2000" name="Science">
        <title>CikA, a bacteriophytochrome that resets the cyanobacterial circadian clock.</title>
        <authorList>
            <person name="Schmitz O."/>
            <person name="Katayama M."/>
            <person name="Williams S.B."/>
            <person name="Kondo T."/>
            <person name="Golden S.S."/>
        </authorList>
    </citation>
    <scope>NUCLEOTIDE SEQUENCE [GENOMIC DNA]</scope>
    <scope>FUNCTION IN INPUT PATHWAY</scope>
    <scope>DOMAIN</scope>
    <scope>DISRUPTION PHENOTYPE</scope>
    <source>
        <strain>ATCC 33912 / PCC 7942 / FACHB-805</strain>
    </source>
</reference>
<reference evidence="20" key="2">
    <citation type="submission" date="2005-08" db="EMBL/GenBank/DDBJ databases">
        <title>Complete sequence of chromosome 1 of Synechococcus elongatus PCC 7942.</title>
        <authorList>
            <consortium name="US DOE Joint Genome Institute"/>
            <person name="Copeland A."/>
            <person name="Lucas S."/>
            <person name="Lapidus A."/>
            <person name="Barry K."/>
            <person name="Detter J.C."/>
            <person name="Glavina T."/>
            <person name="Hammon N."/>
            <person name="Israni S."/>
            <person name="Pitluck S."/>
            <person name="Schmutz J."/>
            <person name="Larimer F."/>
            <person name="Land M."/>
            <person name="Kyrpides N."/>
            <person name="Lykidis A."/>
            <person name="Golden S."/>
            <person name="Richardson P."/>
        </authorList>
    </citation>
    <scope>NUCLEOTIDE SEQUENCE [LARGE SCALE GENOMIC DNA]</scope>
    <source>
        <strain>ATCC 33912 / PCC 7942 / FACHB-805</strain>
    </source>
</reference>
<reference key="3">
    <citation type="journal article" date="2003" name="J. Biol. Chem.">
        <title>Biochemical properties of CikA, an unusual phytochrome-like histidine protein kinase that resets the circadian clock in Synechococcus elongatus PCC 7942.</title>
        <authorList>
            <person name="Mutsuda M."/>
            <person name="Michel K.P."/>
            <person name="Zhang X."/>
            <person name="Montgomery B.L."/>
            <person name="Golden S.S."/>
        </authorList>
    </citation>
    <scope>FUNCTION IN INPUT PATHWAY</scope>
    <scope>CATALYTIC ACTIVITY</scope>
    <scope>PHOSPHORYLATION AT HIS-393</scope>
    <scope>DOMAIN</scope>
    <scope>MUTAGENESIS OF HIS-393</scope>
    <source>
        <strain>ATCC 33912 / PCC 7942 / FACHB-805</strain>
    </source>
</reference>
<reference key="4">
    <citation type="journal article" date="2005" name="EMBO J.">
        <title>LdpA: a component of the circadian clock senses redox state of the cell.</title>
        <authorList>
            <person name="Ivleva N.B."/>
            <person name="Bramlett M.R."/>
            <person name="Lindahl P.A."/>
            <person name="Golden S.S."/>
        </authorList>
    </citation>
    <scope>INTERACTION WITH LDPA</scope>
    <scope>SUBUNIT</scope>
    <scope>INDUCTION</scope>
    <source>
        <strain>ATCC 33912 / PCC 7942 / FACHB-805</strain>
    </source>
</reference>
<reference key="5">
    <citation type="journal article" date="2006" name="Mol. Microbiol.">
        <title>The pseudo-receiver domain of CikA regulates the cyanobacterial circadian input pathway.</title>
        <authorList>
            <person name="Zhang X."/>
            <person name="Dong G."/>
            <person name="Golden S.S."/>
        </authorList>
    </citation>
    <scope>FUNCTION IN INPUT PATHWAY</scope>
    <scope>SUBUNIT</scope>
    <scope>SUBCELLULAR LOCATION</scope>
    <scope>DOMAIN</scope>
    <scope>DISRUPTION PHENOTYPE</scope>
    <scope>MUTAGENESIS OF HIS-393</scope>
    <scope>MUTAGENESIS BY DOMAIN DELETION</scope>
    <source>
        <strain>ATCC 33912 / PCC 7942 / FACHB-805</strain>
    </source>
</reference>
<reference key="6">
    <citation type="journal article" date="2006" name="Proc. Natl. Acad. Sci. U.S.A.">
        <title>Quinone sensing by the circadian input kinase of the cyanobacterial circadian clock.</title>
        <authorList>
            <person name="Ivleva N.B."/>
            <person name="Gao T."/>
            <person name="LiWang A.C."/>
            <person name="Golden S.S."/>
        </authorList>
    </citation>
    <scope>FUNCTION IN INPUT PATHWAY</scope>
    <scope>COPURIFIES WITH KAIA AND KAIC</scope>
    <scope>SUBUNIT</scope>
    <scope>SUBCELLULAR LOCATION</scope>
    <scope>INDUCTION</scope>
    <scope>DOMAIN</scope>
    <scope>DISRUPTION PHENOTYPE</scope>
    <scope>QUINONE-BINDING</scope>
    <scope>MUTAGENESIS OF HIS-393</scope>
    <source>
        <strain>ATCC 33912 / PCC 7942 / FACHB-805</strain>
    </source>
</reference>
<reference key="7">
    <citation type="journal article" date="2010" name="Proc. Natl. Acad. Sci. U.S.A.">
        <title>Three major output pathways from the KaiABC-based oscillator cooperate to generate robust circadian kaiBC expression in cyanobacteria.</title>
        <authorList>
            <person name="Taniguchi Y."/>
            <person name="Takai N."/>
            <person name="Katayama M."/>
            <person name="Kondo T."/>
            <person name="Oyama T."/>
        </authorList>
    </citation>
    <scope>FUNCTION IN OUTPUT PATHWAY</scope>
    <scope>DISRUPTION PHENOTYPE</scope>
    <source>
        <strain>ATCC 33912 / PCC 7942 / FACHB-805</strain>
    </source>
</reference>
<reference key="8">
    <citation type="journal article" date="2010" name="Proc. Natl. Acad. Sci. U.S.A.">
        <title>The KaiA protein of the cyanobacterial circadian oscillator is modulated by a redox-active cofactor.</title>
        <authorList>
            <person name="Wood T.L."/>
            <person name="Bridwell-Rabb J."/>
            <person name="Kim Y.I."/>
            <person name="Gao T."/>
            <person name="Chang Y.G."/>
            <person name="LiWang A."/>
            <person name="Barondeau D.P."/>
            <person name="Golden S.S."/>
        </authorList>
    </citation>
    <scope>INDUCTION</scope>
    <scope>QUINONE-BINDING</scope>
    <source>
        <strain>ATCC 33912 / PCC 7942 / FACHB-805</strain>
    </source>
</reference>
<reference key="9">
    <citation type="journal article" date="2013" name="Mol. Cell">
        <title>Two antagonistic clock-regulated histidine kinases time the activation of circadian gene expression.</title>
        <authorList>
            <person name="Gutu A."/>
            <person name="O'Shea E.K."/>
        </authorList>
    </citation>
    <scope>FUNCTION IN OUTPUT PATHWAY</scope>
    <scope>DISRUPTION PHENOTYPE</scope>
    <source>
        <strain>ATCC 33912 / PCC 7942 / FACHB-805</strain>
    </source>
</reference>
<reference key="10">
    <citation type="journal article" date="2015" name="Science">
        <title>Circadian rhythms. A protein fold switch joins the circadian oscillator to clock output in cyanobacteria.</title>
        <authorList>
            <person name="Chang Y.G."/>
            <person name="Cohen S.E."/>
            <person name="Phong C."/>
            <person name="Myers W.K."/>
            <person name="Kim Y.I."/>
            <person name="Tseng R."/>
            <person name="Lin J."/>
            <person name="Zhang L."/>
            <person name="Boyd J.S."/>
            <person name="Lee Y."/>
            <person name="Kang S."/>
            <person name="Lee D."/>
            <person name="Li S."/>
            <person name="Britt R.D."/>
            <person name="Rust M.J."/>
            <person name="Golden S.S."/>
            <person name="LiWang A."/>
        </authorList>
    </citation>
    <scope>SUBUNIT</scope>
    <scope>DOMAIN</scope>
    <source>
        <strain>ATCC 33912 / PCC 7942 / FACHB-805</strain>
    </source>
</reference>
<reference key="11">
    <citation type="journal article" date="2017" name="Science">
        <title>Structural basis of the day-night transition in a bacterial circadian clock.</title>
        <authorList>
            <person name="Tseng R."/>
            <person name="Goularte N.F."/>
            <person name="Chavan A."/>
            <person name="Luu J."/>
            <person name="Cohen S.E."/>
            <person name="Chang Y.G."/>
            <person name="Heisler J."/>
            <person name="Li S."/>
            <person name="Michael A.K."/>
            <person name="Tripathi S."/>
            <person name="Golden S.S."/>
            <person name="LiWang A."/>
            <person name="Partch C.L."/>
        </authorList>
    </citation>
    <scope>SUBUNIT</scope>
    <source>
        <strain>ATCC 33912 / PCC 7942 / FACHB-805</strain>
    </source>
</reference>
<reference key="12">
    <citation type="journal article" date="2021" name="Science">
        <title>Reconstitution of an intact clock reveals mechanisms of circadian timekeeping.</title>
        <authorList>
            <person name="Chavan A.G."/>
            <person name="Swan J.A."/>
            <person name="Heisler J."/>
            <person name="Sancar C."/>
            <person name="Ernst D.C."/>
            <person name="Fang M."/>
            <person name="Palacios J.G."/>
            <person name="Spangler R.K."/>
            <person name="Bagshaw C.R."/>
            <person name="Tripathi S."/>
            <person name="Crosby P."/>
            <person name="Golden S.S."/>
            <person name="Partch C.L."/>
            <person name="LiWang A."/>
        </authorList>
    </citation>
    <scope>CLOCK RECONSTITUTION</scope>
    <scope>FUNCTION</scope>
    <scope>SUBUNIT</scope>
    <source>
        <strain>ATCC 33912 / PCC 7942 / FACHB-805</strain>
    </source>
</reference>
<reference evidence="21" key="13">
    <citation type="journal article" date="2007" name="Protein Sci.">
        <title>NMR structure of the pseudo-receiver domain of CikA.</title>
        <authorList>
            <person name="Gao T."/>
            <person name="Zhang X."/>
            <person name="Ivleva N.B."/>
            <person name="Golden S.S."/>
            <person name="LiWang A."/>
        </authorList>
    </citation>
    <scope>STRUCTURE BY NMR OF 627-745</scope>
    <source>
        <strain>ATCC 33912 / PCC 7942 / FACHB-805</strain>
    </source>
</reference>
<feature type="chain" id="PRO_0000457277" description="Circadian input-output histidine kinase CikA">
    <location>
        <begin position="1"/>
        <end position="754"/>
    </location>
</feature>
<feature type="domain" description="Histidine kinase" evidence="1">
    <location>
        <begin position="390"/>
        <end position="611"/>
    </location>
</feature>
<feature type="domain" description="Response regulatory" evidence="2">
    <location>
        <begin position="629"/>
        <end position="742"/>
    </location>
</feature>
<feature type="region of interest" description="N-terminal domain, not required to complement the deletion strain" evidence="6 17">
    <location>
        <begin position="1"/>
        <end position="183"/>
    </location>
</feature>
<feature type="region of interest" description="GAF domain, required to complement the deletion strain" evidence="6 17">
    <location>
        <begin position="184"/>
        <end position="338"/>
    </location>
</feature>
<feature type="region of interest" description="PsR domain, required to complement the deletion strain and for cell pole localization, attenuates autophosphorylation activity. Binds KaiB(fs)" evidence="6 11 17">
    <location>
        <begin position="606"/>
        <end position="754"/>
    </location>
</feature>
<feature type="modified residue" description="Phosphohistidine; by autocatalysis" evidence="1 17">
    <location>
        <position position="393"/>
    </location>
</feature>
<feature type="mutagenesis site" description="No longer autophosphorylates. Does not complement a deletion strain. No change in DBMIB sensitivity." evidence="4 6 7">
    <original>H</original>
    <variation>A</variation>
    <location>
        <position position="393"/>
    </location>
</feature>
<feature type="strand" evidence="22">
    <location>
        <begin position="629"/>
        <end position="633"/>
    </location>
</feature>
<feature type="helix" evidence="22">
    <location>
        <begin position="637"/>
        <end position="649"/>
    </location>
</feature>
<feature type="strand" evidence="22">
    <location>
        <begin position="653"/>
        <end position="658"/>
    </location>
</feature>
<feature type="helix" evidence="22">
    <location>
        <begin position="660"/>
        <end position="670"/>
    </location>
</feature>
<feature type="strand" evidence="22">
    <location>
        <begin position="673"/>
        <end position="678"/>
    </location>
</feature>
<feature type="helix" evidence="22">
    <location>
        <begin position="686"/>
        <end position="695"/>
    </location>
</feature>
<feature type="strand" evidence="22">
    <location>
        <begin position="705"/>
        <end position="710"/>
    </location>
</feature>
<feature type="helix" evidence="22">
    <location>
        <begin position="715"/>
        <end position="720"/>
    </location>
</feature>
<feature type="strand" evidence="22">
    <location>
        <begin position="722"/>
        <end position="724"/>
    </location>
</feature>
<feature type="helix" evidence="22">
    <location>
        <begin position="732"/>
        <end position="739"/>
    </location>
</feature>
<dbReference type="EC" id="2.7.13.3" evidence="4"/>
<dbReference type="EMBL" id="AF258464">
    <property type="protein sequence ID" value="AAF82192.1"/>
    <property type="molecule type" value="Genomic_DNA"/>
</dbReference>
<dbReference type="EMBL" id="CP000100">
    <property type="protein sequence ID" value="ABB56676.1"/>
    <property type="molecule type" value="Genomic_DNA"/>
</dbReference>
<dbReference type="RefSeq" id="WP_011243194.1">
    <property type="nucleotide sequence ID" value="NZ_JACJTX010000006.1"/>
</dbReference>
<dbReference type="PDB" id="2J48">
    <property type="method" value="NMR"/>
    <property type="chains" value="A=627-745"/>
</dbReference>
<dbReference type="PDBsum" id="2J48"/>
<dbReference type="SMR" id="Q9KHI5"/>
<dbReference type="IntAct" id="Q9KHI5">
    <property type="interactions" value="5"/>
</dbReference>
<dbReference type="STRING" id="1140.Synpcc7942_0644"/>
<dbReference type="iPTMnet" id="Q9KHI5"/>
<dbReference type="PaxDb" id="1140-Synpcc7942_0644"/>
<dbReference type="PRIDE" id="Q9KHI5"/>
<dbReference type="KEGG" id="syf:Synpcc7942_0644"/>
<dbReference type="eggNOG" id="COG2205">
    <property type="taxonomic scope" value="Bacteria"/>
</dbReference>
<dbReference type="HOGENOM" id="CLU_000445_89_17_3"/>
<dbReference type="OrthoDB" id="500345at2"/>
<dbReference type="BioCyc" id="SYNEL:SYNPCC7942_0644-MONOMER"/>
<dbReference type="EvolutionaryTrace" id="Q9KHI5"/>
<dbReference type="Proteomes" id="UP000889800">
    <property type="component" value="Chromosome"/>
</dbReference>
<dbReference type="GO" id="GO:0005737">
    <property type="term" value="C:cytoplasm"/>
    <property type="evidence" value="ECO:0007669"/>
    <property type="project" value="UniProtKB-SubCell"/>
</dbReference>
<dbReference type="GO" id="GO:0005886">
    <property type="term" value="C:plasma membrane"/>
    <property type="evidence" value="ECO:0007669"/>
    <property type="project" value="TreeGrafter"/>
</dbReference>
<dbReference type="GO" id="GO:0005524">
    <property type="term" value="F:ATP binding"/>
    <property type="evidence" value="ECO:0007669"/>
    <property type="project" value="UniProtKB-KW"/>
</dbReference>
<dbReference type="GO" id="GO:0009927">
    <property type="term" value="F:histidine phosphotransfer kinase activity"/>
    <property type="evidence" value="ECO:0007669"/>
    <property type="project" value="TreeGrafter"/>
</dbReference>
<dbReference type="GO" id="GO:0000155">
    <property type="term" value="F:phosphorelay sensor kinase activity"/>
    <property type="evidence" value="ECO:0007669"/>
    <property type="project" value="InterPro"/>
</dbReference>
<dbReference type="GO" id="GO:0051301">
    <property type="term" value="P:cell division"/>
    <property type="evidence" value="ECO:0007669"/>
    <property type="project" value="UniProtKB-KW"/>
</dbReference>
<dbReference type="GO" id="GO:0097167">
    <property type="term" value="P:circadian regulation of translation"/>
    <property type="evidence" value="ECO:0000315"/>
    <property type="project" value="UniProtKB"/>
</dbReference>
<dbReference type="GO" id="GO:0007623">
    <property type="term" value="P:circadian rhythm"/>
    <property type="evidence" value="ECO:0000315"/>
    <property type="project" value="UniProtKB"/>
</dbReference>
<dbReference type="CDD" id="cd16922">
    <property type="entry name" value="HATPase_EvgS-ArcB-TorS-like"/>
    <property type="match status" value="1"/>
</dbReference>
<dbReference type="CDD" id="cd00082">
    <property type="entry name" value="HisKA"/>
    <property type="match status" value="1"/>
</dbReference>
<dbReference type="FunFam" id="3.30.565.10:FF:000010">
    <property type="entry name" value="Sensor histidine kinase RcsC"/>
    <property type="match status" value="1"/>
</dbReference>
<dbReference type="FunFam" id="1.10.287.130:FF:000038">
    <property type="entry name" value="Sensory transduction histidine kinase"/>
    <property type="match status" value="1"/>
</dbReference>
<dbReference type="Gene3D" id="1.10.287.130">
    <property type="match status" value="1"/>
</dbReference>
<dbReference type="Gene3D" id="3.30.450.40">
    <property type="match status" value="1"/>
</dbReference>
<dbReference type="Gene3D" id="3.40.50.2300">
    <property type="match status" value="1"/>
</dbReference>
<dbReference type="Gene3D" id="3.30.565.10">
    <property type="entry name" value="Histidine kinase-like ATPase, C-terminal domain"/>
    <property type="match status" value="1"/>
</dbReference>
<dbReference type="InterPro" id="IPR011006">
    <property type="entry name" value="CheY-like_superfamily"/>
</dbReference>
<dbReference type="InterPro" id="IPR003018">
    <property type="entry name" value="GAF"/>
</dbReference>
<dbReference type="InterPro" id="IPR029016">
    <property type="entry name" value="GAF-like_dom_sf"/>
</dbReference>
<dbReference type="InterPro" id="IPR036890">
    <property type="entry name" value="HATPase_C_sf"/>
</dbReference>
<dbReference type="InterPro" id="IPR005467">
    <property type="entry name" value="His_kinase_dom"/>
</dbReference>
<dbReference type="InterPro" id="IPR003661">
    <property type="entry name" value="HisK_dim/P_dom"/>
</dbReference>
<dbReference type="InterPro" id="IPR036097">
    <property type="entry name" value="HisK_dim/P_sf"/>
</dbReference>
<dbReference type="InterPro" id="IPR016132">
    <property type="entry name" value="Phyto_chromo_attachment"/>
</dbReference>
<dbReference type="InterPro" id="IPR004358">
    <property type="entry name" value="Sig_transdc_His_kin-like_C"/>
</dbReference>
<dbReference type="InterPro" id="IPR001789">
    <property type="entry name" value="Sig_transdc_resp-reg_receiver"/>
</dbReference>
<dbReference type="PANTHER" id="PTHR43047:SF63">
    <property type="entry name" value="HISTIDINE KINASE"/>
    <property type="match status" value="1"/>
</dbReference>
<dbReference type="PANTHER" id="PTHR43047">
    <property type="entry name" value="TWO-COMPONENT HISTIDINE PROTEIN KINASE"/>
    <property type="match status" value="1"/>
</dbReference>
<dbReference type="Pfam" id="PF01590">
    <property type="entry name" value="GAF"/>
    <property type="match status" value="1"/>
</dbReference>
<dbReference type="Pfam" id="PF02518">
    <property type="entry name" value="HATPase_c"/>
    <property type="match status" value="1"/>
</dbReference>
<dbReference type="Pfam" id="PF00512">
    <property type="entry name" value="HisKA"/>
    <property type="match status" value="1"/>
</dbReference>
<dbReference type="PRINTS" id="PR00344">
    <property type="entry name" value="BCTRLSENSOR"/>
</dbReference>
<dbReference type="SMART" id="SM00065">
    <property type="entry name" value="GAF"/>
    <property type="match status" value="1"/>
</dbReference>
<dbReference type="SMART" id="SM00387">
    <property type="entry name" value="HATPase_c"/>
    <property type="match status" value="1"/>
</dbReference>
<dbReference type="SMART" id="SM00388">
    <property type="entry name" value="HisKA"/>
    <property type="match status" value="1"/>
</dbReference>
<dbReference type="SMART" id="SM00448">
    <property type="entry name" value="REC"/>
    <property type="match status" value="1"/>
</dbReference>
<dbReference type="SUPFAM" id="SSF55874">
    <property type="entry name" value="ATPase domain of HSP90 chaperone/DNA topoisomerase II/histidine kinase"/>
    <property type="match status" value="1"/>
</dbReference>
<dbReference type="SUPFAM" id="SSF52172">
    <property type="entry name" value="CheY-like"/>
    <property type="match status" value="1"/>
</dbReference>
<dbReference type="SUPFAM" id="SSF55781">
    <property type="entry name" value="GAF domain-like"/>
    <property type="match status" value="1"/>
</dbReference>
<dbReference type="SUPFAM" id="SSF47384">
    <property type="entry name" value="Homodimeric domain of signal transducing histidine kinase"/>
    <property type="match status" value="1"/>
</dbReference>
<dbReference type="PROSITE" id="PS50109">
    <property type="entry name" value="HIS_KIN"/>
    <property type="match status" value="1"/>
</dbReference>
<dbReference type="PROSITE" id="PS50046">
    <property type="entry name" value="PHYTOCHROME_2"/>
    <property type="match status" value="1"/>
</dbReference>
<dbReference type="PROSITE" id="PS50110">
    <property type="entry name" value="RESPONSE_REGULATORY"/>
    <property type="match status" value="1"/>
</dbReference>
<organism>
    <name type="scientific">Synechococcus elongatus (strain ATCC 33912 / PCC 7942 / FACHB-805)</name>
    <name type="common">Anacystis nidulans R2</name>
    <dbReference type="NCBI Taxonomy" id="1140"/>
    <lineage>
        <taxon>Bacteria</taxon>
        <taxon>Bacillati</taxon>
        <taxon>Cyanobacteriota</taxon>
        <taxon>Cyanophyceae</taxon>
        <taxon>Synechococcales</taxon>
        <taxon>Synechococcaceae</taxon>
        <taxon>Synechococcus</taxon>
    </lineage>
</organism>
<sequence>MLAPSSNCSLASQRLTPEGFAQLQSALQDFVATLPQAFYWDSRSLHTHLRTQTGDCAIAIAAGFQLLLLGRTAAEYCQPHPLSEPHHVSVQFGADSIQRYCQATNLPVEYQPALAQLGDLSLNPDLISQFSNLLIAAIAADRAPLAAQYPAVSVCQPLEQALHWQEEQDRLISQVSAQIRLSLDLSEILTTTIREIRQLLNADRAIIYQFKPQCLDAGLDQRWPLYIPSQSYITYEDRRNEALLSVIDPLVQPGLLITTEEWQRFQQGETLLIDSVGFYKERLPEQYSFYERVQVRSVCKIPILVQGRIWGLLVAHQCQQDHRWQPRERDILQHLAEHLSIAIYQAQLYGQLQDQTQTLENRVLERTQELIDALALAQAANAAKGEFLATMSHELRTPLTCVIGMSSTLLRWAFGPLTERQREYIKAIHDSGEHLLELINDILDLSQIEAGKAALQVRPFSLSRLATQTLNTLQEKARLGEIQLMLDLQLNNRVDVFRADPKRLRQILINLLSNAVKFTEPQGTVFLRVWREGDRAIFQVSDTGIGIPESEQAQLFQKFQQLDTSIRRQYGGTGLGLALTKQLVELHGGHIQIESTVGQGSTFTVWIPEQTLIEPVEPRPSIDNLPAGHILLLEEEDEAATVVCEMLTAAGFKVIWLVDGSTALDQLDLLQPIVILMAWPPPDQSCLLLLQHLREHQADPHPPLVLFLGEPPVDPLLTAQASAILSKPLDPQLLLTTLQGLCPPNLSEGDRPSS</sequence>
<evidence type="ECO:0000255" key="1">
    <source>
        <dbReference type="PROSITE-ProRule" id="PRU00107"/>
    </source>
</evidence>
<evidence type="ECO:0000255" key="2">
    <source>
        <dbReference type="PROSITE-ProRule" id="PRU00169"/>
    </source>
</evidence>
<evidence type="ECO:0000269" key="3">
    <source>
    </source>
</evidence>
<evidence type="ECO:0000269" key="4">
    <source>
    </source>
</evidence>
<evidence type="ECO:0000269" key="5">
    <source>
    </source>
</evidence>
<evidence type="ECO:0000269" key="6">
    <source>
    </source>
</evidence>
<evidence type="ECO:0000269" key="7">
    <source>
    </source>
</evidence>
<evidence type="ECO:0000269" key="8">
    <source>
    </source>
</evidence>
<evidence type="ECO:0000269" key="9">
    <source>
    </source>
</evidence>
<evidence type="ECO:0000269" key="10">
    <source>
    </source>
</evidence>
<evidence type="ECO:0000269" key="11">
    <source>
    </source>
</evidence>
<evidence type="ECO:0000269" key="12">
    <source>
    </source>
</evidence>
<evidence type="ECO:0000269" key="13">
    <source>
    </source>
</evidence>
<evidence type="ECO:0000303" key="14">
    <source>
    </source>
</evidence>
<evidence type="ECO:0000303" key="15">
    <source>
    </source>
</evidence>
<evidence type="ECO:0000305" key="16"/>
<evidence type="ECO:0000305" key="17">
    <source>
    </source>
</evidence>
<evidence type="ECO:0000305" key="18">
    <source>
    </source>
</evidence>
<evidence type="ECO:0000312" key="19">
    <source>
        <dbReference type="EMBL" id="AAF82192.1"/>
    </source>
</evidence>
<evidence type="ECO:0000312" key="20">
    <source>
        <dbReference type="EMBL" id="ABB56676.1"/>
    </source>
</evidence>
<evidence type="ECO:0007744" key="21">
    <source>
        <dbReference type="PDB" id="2J48"/>
    </source>
</evidence>
<evidence type="ECO:0007829" key="22">
    <source>
        <dbReference type="PDB" id="2J48"/>
    </source>
</evidence>
<name>CIKA_SYNE7</name>
<proteinExistence type="evidence at protein level"/>
<accession>Q9KHI5</accession>
<accession>Q31QJ3</accession>
<keyword id="KW-0002">3D-structure</keyword>
<keyword id="KW-0067">ATP-binding</keyword>
<keyword id="KW-0090">Biological rhythms</keyword>
<keyword id="KW-0131">Cell cycle</keyword>
<keyword id="KW-0132">Cell division</keyword>
<keyword id="KW-0963">Cytoplasm</keyword>
<keyword id="KW-0418">Kinase</keyword>
<keyword id="KW-0472">Membrane</keyword>
<keyword id="KW-0547">Nucleotide-binding</keyword>
<keyword id="KW-0597">Phosphoprotein</keyword>
<keyword id="KW-1185">Reference proteome</keyword>
<keyword id="KW-0808">Transferase</keyword>
<keyword id="KW-0902">Two-component regulatory system</keyword>
<protein>
    <recommendedName>
        <fullName evidence="14 15">Circadian input-output histidine kinase CikA</fullName>
        <ecNumber evidence="4">2.7.13.3</ecNumber>
    </recommendedName>
</protein>
<gene>
    <name evidence="14" type="primary">cikA</name>
    <name evidence="20" type="ordered locus">Synpcc7942_0644</name>
</gene>